<keyword id="KW-0028">Amino-acid biosynthesis</keyword>
<keyword id="KW-0963">Cytoplasm</keyword>
<keyword id="KW-0220">Diaminopimelate biosynthesis</keyword>
<keyword id="KW-0457">Lysine biosynthesis</keyword>
<keyword id="KW-0520">NAD</keyword>
<keyword id="KW-0521">NADP</keyword>
<keyword id="KW-0560">Oxidoreductase</keyword>
<evidence type="ECO:0000255" key="1">
    <source>
        <dbReference type="HAMAP-Rule" id="MF_00102"/>
    </source>
</evidence>
<evidence type="ECO:0000305" key="2"/>
<dbReference type="EC" id="1.17.1.8" evidence="1"/>
<dbReference type="EMBL" id="CP000099">
    <property type="protein sequence ID" value="AAZ70119.1"/>
    <property type="molecule type" value="Genomic_DNA"/>
</dbReference>
<dbReference type="SMR" id="Q46DC3"/>
<dbReference type="STRING" id="269797.Mbar_A1151"/>
<dbReference type="PaxDb" id="269797-Mbar_A1151"/>
<dbReference type="KEGG" id="mba:Mbar_A1151"/>
<dbReference type="eggNOG" id="arCOG04393">
    <property type="taxonomic scope" value="Archaea"/>
</dbReference>
<dbReference type="HOGENOM" id="CLU_047479_2_1_2"/>
<dbReference type="OrthoDB" id="195035at2157"/>
<dbReference type="UniPathway" id="UPA00034">
    <property type="reaction ID" value="UER00018"/>
</dbReference>
<dbReference type="GO" id="GO:0005737">
    <property type="term" value="C:cytoplasm"/>
    <property type="evidence" value="ECO:0007669"/>
    <property type="project" value="UniProtKB-SubCell"/>
</dbReference>
<dbReference type="GO" id="GO:0008839">
    <property type="term" value="F:4-hydroxy-tetrahydrodipicolinate reductase"/>
    <property type="evidence" value="ECO:0007669"/>
    <property type="project" value="UniProtKB-EC"/>
</dbReference>
<dbReference type="GO" id="GO:0051287">
    <property type="term" value="F:NAD binding"/>
    <property type="evidence" value="ECO:0007669"/>
    <property type="project" value="UniProtKB-UniRule"/>
</dbReference>
<dbReference type="GO" id="GO:0050661">
    <property type="term" value="F:NADP binding"/>
    <property type="evidence" value="ECO:0007669"/>
    <property type="project" value="UniProtKB-UniRule"/>
</dbReference>
<dbReference type="GO" id="GO:0016726">
    <property type="term" value="F:oxidoreductase activity, acting on CH or CH2 groups, NAD or NADP as acceptor"/>
    <property type="evidence" value="ECO:0007669"/>
    <property type="project" value="UniProtKB-UniRule"/>
</dbReference>
<dbReference type="GO" id="GO:0019877">
    <property type="term" value="P:diaminopimelate biosynthetic process"/>
    <property type="evidence" value="ECO:0007669"/>
    <property type="project" value="UniProtKB-UniRule"/>
</dbReference>
<dbReference type="GO" id="GO:0009089">
    <property type="term" value="P:lysine biosynthetic process via diaminopimelate"/>
    <property type="evidence" value="ECO:0007669"/>
    <property type="project" value="UniProtKB-UniRule"/>
</dbReference>
<dbReference type="CDD" id="cd02274">
    <property type="entry name" value="DHDPR_N"/>
    <property type="match status" value="1"/>
</dbReference>
<dbReference type="FunFam" id="3.30.360.10:FF:000004">
    <property type="entry name" value="4-hydroxy-tetrahydrodipicolinate reductase"/>
    <property type="match status" value="1"/>
</dbReference>
<dbReference type="Gene3D" id="3.30.360.10">
    <property type="entry name" value="Dihydrodipicolinate Reductase, domain 2"/>
    <property type="match status" value="1"/>
</dbReference>
<dbReference type="Gene3D" id="3.40.50.720">
    <property type="entry name" value="NAD(P)-binding Rossmann-like Domain"/>
    <property type="match status" value="1"/>
</dbReference>
<dbReference type="HAMAP" id="MF_00102">
    <property type="entry name" value="DapB"/>
    <property type="match status" value="1"/>
</dbReference>
<dbReference type="InterPro" id="IPR022663">
    <property type="entry name" value="DapB_C"/>
</dbReference>
<dbReference type="InterPro" id="IPR000846">
    <property type="entry name" value="DapB_N"/>
</dbReference>
<dbReference type="InterPro" id="IPR022664">
    <property type="entry name" value="DapB_N_CS"/>
</dbReference>
<dbReference type="InterPro" id="IPR023940">
    <property type="entry name" value="DHDPR_bac"/>
</dbReference>
<dbReference type="InterPro" id="IPR036291">
    <property type="entry name" value="NAD(P)-bd_dom_sf"/>
</dbReference>
<dbReference type="NCBIfam" id="TIGR00036">
    <property type="entry name" value="dapB"/>
    <property type="match status" value="1"/>
</dbReference>
<dbReference type="PANTHER" id="PTHR20836:SF0">
    <property type="entry name" value="4-HYDROXY-TETRAHYDRODIPICOLINATE REDUCTASE 1, CHLOROPLASTIC-RELATED"/>
    <property type="match status" value="1"/>
</dbReference>
<dbReference type="PANTHER" id="PTHR20836">
    <property type="entry name" value="DIHYDRODIPICOLINATE REDUCTASE"/>
    <property type="match status" value="1"/>
</dbReference>
<dbReference type="Pfam" id="PF05173">
    <property type="entry name" value="DapB_C"/>
    <property type="match status" value="1"/>
</dbReference>
<dbReference type="Pfam" id="PF01113">
    <property type="entry name" value="DapB_N"/>
    <property type="match status" value="1"/>
</dbReference>
<dbReference type="PIRSF" id="PIRSF000161">
    <property type="entry name" value="DHPR"/>
    <property type="match status" value="1"/>
</dbReference>
<dbReference type="SUPFAM" id="SSF55347">
    <property type="entry name" value="Glyceraldehyde-3-phosphate dehydrogenase-like, C-terminal domain"/>
    <property type="match status" value="1"/>
</dbReference>
<dbReference type="SUPFAM" id="SSF51735">
    <property type="entry name" value="NAD(P)-binding Rossmann-fold domains"/>
    <property type="match status" value="1"/>
</dbReference>
<dbReference type="PROSITE" id="PS01298">
    <property type="entry name" value="DAPB"/>
    <property type="match status" value="1"/>
</dbReference>
<feature type="chain" id="PRO_0000228407" description="4-hydroxy-tetrahydrodipicolinate reductase">
    <location>
        <begin position="1"/>
        <end position="263"/>
    </location>
</feature>
<feature type="active site" description="Proton donor/acceptor" evidence="1">
    <location>
        <position position="157"/>
    </location>
</feature>
<feature type="active site" description="Proton donor" evidence="1">
    <location>
        <position position="161"/>
    </location>
</feature>
<feature type="binding site" evidence="1">
    <location>
        <begin position="8"/>
        <end position="13"/>
    </location>
    <ligand>
        <name>NAD(+)</name>
        <dbReference type="ChEBI" id="CHEBI:57540"/>
    </ligand>
</feature>
<feature type="binding site" evidence="1">
    <location>
        <position position="34"/>
    </location>
    <ligand>
        <name>NAD(+)</name>
        <dbReference type="ChEBI" id="CHEBI:57540"/>
    </ligand>
</feature>
<feature type="binding site" evidence="1">
    <location>
        <begin position="99"/>
        <end position="101"/>
    </location>
    <ligand>
        <name>NAD(+)</name>
        <dbReference type="ChEBI" id="CHEBI:57540"/>
    </ligand>
</feature>
<feature type="binding site" evidence="1">
    <location>
        <begin position="125"/>
        <end position="128"/>
    </location>
    <ligand>
        <name>NAD(+)</name>
        <dbReference type="ChEBI" id="CHEBI:57540"/>
    </ligand>
</feature>
<feature type="binding site" evidence="1">
    <location>
        <position position="158"/>
    </location>
    <ligand>
        <name>(S)-2,3,4,5-tetrahydrodipicolinate</name>
        <dbReference type="ChEBI" id="CHEBI:16845"/>
    </ligand>
</feature>
<feature type="binding site" evidence="1">
    <location>
        <begin position="167"/>
        <end position="168"/>
    </location>
    <ligand>
        <name>(S)-2,3,4,5-tetrahydrodipicolinate</name>
        <dbReference type="ChEBI" id="CHEBI:16845"/>
    </ligand>
</feature>
<gene>
    <name evidence="1" type="primary">dapB</name>
    <name type="ordered locus">Mbar_A1151</name>
</gene>
<reference key="1">
    <citation type="journal article" date="2006" name="J. Bacteriol.">
        <title>The Methanosarcina barkeri genome: comparative analysis with Methanosarcina acetivorans and Methanosarcina mazei reveals extensive rearrangement within methanosarcinal genomes.</title>
        <authorList>
            <person name="Maeder D.L."/>
            <person name="Anderson I."/>
            <person name="Brettin T.S."/>
            <person name="Bruce D.C."/>
            <person name="Gilna P."/>
            <person name="Han C.S."/>
            <person name="Lapidus A."/>
            <person name="Metcalf W.W."/>
            <person name="Saunders E."/>
            <person name="Tapia R."/>
            <person name="Sowers K.R."/>
        </authorList>
    </citation>
    <scope>NUCLEOTIDE SEQUENCE [LARGE SCALE GENOMIC DNA]</scope>
    <source>
        <strain>Fusaro / DSM 804</strain>
    </source>
</reference>
<accession>Q46DC3</accession>
<sequence>MINVAVLGACGRMGSLIVENVINSKDMQLVAAFDISYFGRDAGEFARVGKLGVQISDVKNLETVLKESKADVLIDFTAAGATVVNAPIAARAGVNLIIGTTGLTPEQRAVIDEAIQEGQVSAVISPNYSVGVNVFFKIIREAAKYLADYDIEIIEAHHNQKKDAPSGTALRAADIISEAVGGREYVYGREGIAPRGKEIGIHGVRAGDITGDHIVLFAGNSERIEIKHIAHSRQIFAKGAVRAAEWVCRQKPGIYSMDDVLGL</sequence>
<comment type="function">
    <text evidence="1">Catalyzes the conversion of 4-hydroxy-tetrahydrodipicolinate (HTPA) to tetrahydrodipicolinate.</text>
</comment>
<comment type="catalytic activity">
    <reaction evidence="1">
        <text>(S)-2,3,4,5-tetrahydrodipicolinate + NAD(+) + H2O = (2S,4S)-4-hydroxy-2,3,4,5-tetrahydrodipicolinate + NADH + H(+)</text>
        <dbReference type="Rhea" id="RHEA:35323"/>
        <dbReference type="ChEBI" id="CHEBI:15377"/>
        <dbReference type="ChEBI" id="CHEBI:15378"/>
        <dbReference type="ChEBI" id="CHEBI:16845"/>
        <dbReference type="ChEBI" id="CHEBI:57540"/>
        <dbReference type="ChEBI" id="CHEBI:57945"/>
        <dbReference type="ChEBI" id="CHEBI:67139"/>
        <dbReference type="EC" id="1.17.1.8"/>
    </reaction>
</comment>
<comment type="catalytic activity">
    <reaction evidence="1">
        <text>(S)-2,3,4,5-tetrahydrodipicolinate + NADP(+) + H2O = (2S,4S)-4-hydroxy-2,3,4,5-tetrahydrodipicolinate + NADPH + H(+)</text>
        <dbReference type="Rhea" id="RHEA:35331"/>
        <dbReference type="ChEBI" id="CHEBI:15377"/>
        <dbReference type="ChEBI" id="CHEBI:15378"/>
        <dbReference type="ChEBI" id="CHEBI:16845"/>
        <dbReference type="ChEBI" id="CHEBI:57783"/>
        <dbReference type="ChEBI" id="CHEBI:58349"/>
        <dbReference type="ChEBI" id="CHEBI:67139"/>
        <dbReference type="EC" id="1.17.1.8"/>
    </reaction>
</comment>
<comment type="pathway">
    <text evidence="1">Amino-acid biosynthesis; L-lysine biosynthesis via DAP pathway; (S)-tetrahydrodipicolinate from L-aspartate: step 4/4.</text>
</comment>
<comment type="subcellular location">
    <subcellularLocation>
        <location evidence="1">Cytoplasm</location>
    </subcellularLocation>
</comment>
<comment type="similarity">
    <text evidence="1">Belongs to the DapB family.</text>
</comment>
<comment type="caution">
    <text evidence="2">Was originally thought to be a dihydrodipicolinate reductase (DHDPR), catalyzing the conversion of dihydrodipicolinate to tetrahydrodipicolinate. However, it was shown in E.coli that the substrate of the enzymatic reaction is not dihydrodipicolinate (DHDP) but in fact (2S,4S)-4-hydroxy-2,3,4,5-tetrahydrodipicolinic acid (HTPA), the product released by the DapA-catalyzed reaction.</text>
</comment>
<name>DAPB_METBF</name>
<proteinExistence type="inferred from homology"/>
<protein>
    <recommendedName>
        <fullName evidence="1">4-hydroxy-tetrahydrodipicolinate reductase</fullName>
        <shortName evidence="1">HTPA reductase</shortName>
        <ecNumber evidence="1">1.17.1.8</ecNumber>
    </recommendedName>
</protein>
<organism>
    <name type="scientific">Methanosarcina barkeri (strain Fusaro / DSM 804)</name>
    <dbReference type="NCBI Taxonomy" id="269797"/>
    <lineage>
        <taxon>Archaea</taxon>
        <taxon>Methanobacteriati</taxon>
        <taxon>Methanobacteriota</taxon>
        <taxon>Stenosarchaea group</taxon>
        <taxon>Methanomicrobia</taxon>
        <taxon>Methanosarcinales</taxon>
        <taxon>Methanosarcinaceae</taxon>
        <taxon>Methanosarcina</taxon>
    </lineage>
</organism>